<comment type="function">
    <text evidence="2">RNA-directed RNA polymerase that catalyzes the transcription of viral mRNAs, their capping and polyadenylation. The template is composed of the viral RNA tightly encapsidated by the nucleoprotein (N). The viral polymerase binds to the genomic RNA at the 3' leader promoter, and transcribes subsequently all viral mRNAs with a decreasing efficiency. The first gene is the most transcribed, and the last the least transcribed. The viral phosphoprotein acts as a processivity factor. Capping is concomitant with initiation of mRNA transcription. Indeed, a GDP polyribonucleotidyl transferase (PRNTase) adds the cap structure when the nascent RNA chain length has reached few nucleotides. Ribose 2'-O methylation of viral mRNA cap precedes and facilitates subsequent guanine-N-7 methylation, both activities being carried by the viral polymerase. Polyadenylation of mRNAs occur by a stuttering mechanism at a slipery stop site present at the end viral genes. After finishing transcription of a mRNA, the polymerase can resume transcription of the downstream gene.</text>
</comment>
<comment type="function">
    <text evidence="2">RNA-directed RNA polymerase that catalyzes the replication of viral genomic RNA. The template is composed of the viral RNA tightly encapsidated by the nucleoprotein (N). The replicase mode is dependent on intracellular N protein concentration. In this mode, the polymerase replicates the whole viral genome without recognizing transcriptional signals, and the replicated genome is not caped or polyadenylated.</text>
</comment>
<comment type="catalytic activity">
    <reaction evidence="4">
        <text>RNA(n) + a ribonucleoside 5'-triphosphate = RNA(n+1) + diphosphate</text>
        <dbReference type="Rhea" id="RHEA:21248"/>
        <dbReference type="Rhea" id="RHEA-COMP:14527"/>
        <dbReference type="Rhea" id="RHEA-COMP:17342"/>
        <dbReference type="ChEBI" id="CHEBI:33019"/>
        <dbReference type="ChEBI" id="CHEBI:61557"/>
        <dbReference type="ChEBI" id="CHEBI:140395"/>
        <dbReference type="EC" id="2.7.7.48"/>
    </reaction>
</comment>
<comment type="catalytic activity">
    <reaction evidence="2">
        <text>a 5'-end (5'-triphosphoguanosine)-adenylyl-adenylyl-cytidylyl-adenosine in mRNA + 2 S-adenosyl-L-methionine = a 5'-end (N(7)-methyl 5'-triphosphoguanosine)-(2'-O-methyladenylyl)-adenylyl-cytidylyl-adenosine in mRNA + 2 S-adenosyl-L-homocysteine + H(+)</text>
        <dbReference type="Rhea" id="RHEA:65376"/>
        <dbReference type="Rhea" id="RHEA-COMP:16797"/>
        <dbReference type="Rhea" id="RHEA-COMP:16798"/>
        <dbReference type="ChEBI" id="CHEBI:15378"/>
        <dbReference type="ChEBI" id="CHEBI:57856"/>
        <dbReference type="ChEBI" id="CHEBI:59789"/>
        <dbReference type="ChEBI" id="CHEBI:156483"/>
        <dbReference type="ChEBI" id="CHEBI:156484"/>
        <dbReference type="EC" id="2.1.1.375"/>
    </reaction>
</comment>
<comment type="catalytic activity">
    <reaction evidence="2">
        <text>a 5'-end (5'-triphosphoguanosine)-adenylyl-adenylyl-cytidylyl-adenosine in mRNA + S-adenosyl-L-methionine = a 5'-end (5'-triphosphoguanosine)-(2'-O-methyladenylyl)-adenylyl-cytidylyl-adenosine in mRNA + S-adenosyl-L-homocysteine + H(+)</text>
        <dbReference type="Rhea" id="RHEA:65380"/>
        <dbReference type="Rhea" id="RHEA-COMP:16797"/>
        <dbReference type="Rhea" id="RHEA-COMP:16801"/>
        <dbReference type="ChEBI" id="CHEBI:15378"/>
        <dbReference type="ChEBI" id="CHEBI:57856"/>
        <dbReference type="ChEBI" id="CHEBI:59789"/>
        <dbReference type="ChEBI" id="CHEBI:156482"/>
        <dbReference type="ChEBI" id="CHEBI:156484"/>
    </reaction>
</comment>
<comment type="catalytic activity">
    <reaction evidence="3">
        <text>a 5'-end triphospho-adenylyl-adenylyl-cytidylyl-adenosine in mRNA + GDP + H(+) = a 5'-end (5'-triphosphoguanosine)-adenylyl-adenylyl-cytidylyl-adenosine in mRNA + diphosphate</text>
        <dbReference type="Rhea" id="RHEA:65436"/>
        <dbReference type="Rhea" id="RHEA-COMP:16797"/>
        <dbReference type="Rhea" id="RHEA-COMP:16799"/>
        <dbReference type="ChEBI" id="CHEBI:15378"/>
        <dbReference type="ChEBI" id="CHEBI:33019"/>
        <dbReference type="ChEBI" id="CHEBI:58189"/>
        <dbReference type="ChEBI" id="CHEBI:156484"/>
        <dbReference type="ChEBI" id="CHEBI:156503"/>
        <dbReference type="EC" id="2.7.7.88"/>
    </reaction>
</comment>
<comment type="catalytic activity">
    <reaction evidence="2">
        <text>a 5'-end (5'-triphosphoguanosine)-(2'-O-methyladenylyl)-adenylyl-cytidylyl-adenosine in mRNA + S-adenosyl-L-methionine = a 5'-end (N(7)-methyl 5'-triphosphoguanosine)-(2'-O-methyladenylyl)-adenylyl-cytidylyl-adenosine in mRNA + S-adenosyl-L-homocysteine</text>
        <dbReference type="Rhea" id="RHEA:65440"/>
        <dbReference type="Rhea" id="RHEA-COMP:16798"/>
        <dbReference type="Rhea" id="RHEA-COMP:16801"/>
        <dbReference type="ChEBI" id="CHEBI:57856"/>
        <dbReference type="ChEBI" id="CHEBI:59789"/>
        <dbReference type="ChEBI" id="CHEBI:156482"/>
        <dbReference type="ChEBI" id="CHEBI:156483"/>
    </reaction>
</comment>
<comment type="catalytic activity">
    <reaction evidence="3">
        <text>GTP + H2O = GDP + phosphate + H(+)</text>
        <dbReference type="Rhea" id="RHEA:19669"/>
        <dbReference type="ChEBI" id="CHEBI:15377"/>
        <dbReference type="ChEBI" id="CHEBI:15378"/>
        <dbReference type="ChEBI" id="CHEBI:37565"/>
        <dbReference type="ChEBI" id="CHEBI:43474"/>
        <dbReference type="ChEBI" id="CHEBI:58189"/>
    </reaction>
</comment>
<comment type="subunit">
    <text evidence="2">May form homodimer. Interacts with the P protein.</text>
</comment>
<comment type="subcellular location">
    <subcellularLocation>
        <location evidence="2">Virion</location>
    </subcellularLocation>
    <subcellularLocation>
        <location evidence="2">Host cytoplasm</location>
    </subcellularLocation>
    <text evidence="2">L and P are packaged asymmetrically towards the blunt end of the virus.</text>
</comment>
<comment type="similarity">
    <text evidence="7">Belongs to the rhabdoviruses protein L family.</text>
</comment>
<name>L_RABVD</name>
<organism>
    <name type="scientific">Rabies virus (strain China/DRV)</name>
    <name type="common">RABV</name>
    <dbReference type="NCBI Taxonomy" id="445792"/>
    <lineage>
        <taxon>Viruses</taxon>
        <taxon>Riboviria</taxon>
        <taxon>Orthornavirae</taxon>
        <taxon>Negarnaviricota</taxon>
        <taxon>Haploviricotina</taxon>
        <taxon>Monjiviricetes</taxon>
        <taxon>Mononegavirales</taxon>
        <taxon>Rhabdoviridae</taxon>
        <taxon>Alpharhabdovirinae</taxon>
        <taxon>Lyssavirus</taxon>
        <taxon>Lyssavirus rabies</taxon>
    </lineage>
</organism>
<evidence type="ECO:0000250" key="1"/>
<evidence type="ECO:0000250" key="2">
    <source>
        <dbReference type="UniProtKB" id="P03523"/>
    </source>
</evidence>
<evidence type="ECO:0000250" key="3">
    <source>
        <dbReference type="UniProtKB" id="P28887"/>
    </source>
</evidence>
<evidence type="ECO:0000255" key="4">
    <source>
        <dbReference type="PROSITE-ProRule" id="PRU00539"/>
    </source>
</evidence>
<evidence type="ECO:0000255" key="5">
    <source>
        <dbReference type="PROSITE-ProRule" id="PRU00923"/>
    </source>
</evidence>
<evidence type="ECO:0000256" key="6">
    <source>
        <dbReference type="SAM" id="MobiDB-lite"/>
    </source>
</evidence>
<evidence type="ECO:0000305" key="7"/>
<reference key="1">
    <citation type="submission" date="2006-08" db="EMBL/GenBank/DDBJ databases">
        <authorList>
            <person name="Zhao Y.J."/>
            <person name="Guo L."/>
            <person name="Huang Y."/>
            <person name="Qian A.D."/>
        </authorList>
    </citation>
    <scope>NUCLEOTIDE SEQUENCE [GENOMIC RNA]</scope>
</reference>
<proteinExistence type="inferred from homology"/>
<sequence>MLDPGEVYDDPIDPVESDAEPRGAPTVPNILRNSDYNLNSPLIEDPAGLMLEWLKTGNRPYRMTLTDNCSRSYKVLKDYFKKVDLGSLKVGGTAAQSMISLWLYGAHSESNRSRRCITDLAHFYSKSSPIEKLLNCTLGNRGLRIPPEGVLSCLEKVDYDKAFGRYLANTYSSYLFFHVIILYMNALDQDEEKTILALWKDLTSVDIGKDLVKFKDQIWGLLIVTKDFVYSQSSNCLFDRNYTLMLKDLFLSRFNSLMILLSPPEPLYSDDLISQLCQLYIAGDQVLSMCGNSGYEVIKILEPYVVNSLVQRAEKFRPLIHSLGDFPVFIKDEVSQLEGTFGPSAKRFFRVLYQFDNIHDLVFVYGCYRHWGHPYIDYRKGLSKLYDQVHMKKVIDKSYQECLASDLARRILRWGFDKYSKWYLDSRFLAQDHPLTPYVKTQTWPPRHIVDLVGDTWHKLPITQIFEIPESMDPSEILDDKSHSLTRTRLASWLSGNRGGPVPSEKVIITALSKPPINPREFLKSIDLGGLPDEDLIIGLKPKERELKIEGRFFALMSWNLRLYFVITEKLLANYILPLFDALTMTDNLNKVFKKLIDRVTGQGLSDYSRVTYAFHLDYEKWNNHQRLESPEDVFSVLDQVFGLKRVFSRTHEFFQKSWIYYSDRSDLIGLWEDQIYCLDISNGPTCWNGQDGGLEGLRQKGWSLVSLLMIDRESQTRNTRTKILAQGDNQVLCPTYMLSPGLSLEGLLYELESISRNALSIYRAIEEGASKLGLIIKKEETMCSYDFLIYGKTPLFRGNILVPESKRWARVSCISNDQIVNLANIMSTVSTNALTVAQHSQSLIKPMRDFLLVSVQAVFHYLLFSPILKGRVYKILSAEGESFLLAMSRIIYLDPSLGGVSGMSLGRFHIRQFSDPVSEGLSFWREIWLSSHESWIHALCQEAGNPDLGERTLESFTRLLEDPTTLNIKGGASPTILLKDAIRKALYDEVDKVKNSEFREAILLSKTHRDNFILFLKSVEPLFPRFLSELFSSSFLGIPESVIGLIQNSRTIRRQFRKSLSRTLEESFYNSEIHGINRMTQTPQRVGRVWPCSSERADLLREISWGRKVVGTTVPHPSEMLGLLPKSSISCSCGATGGGNPRVSVSVLPSFDQSFFSRGPLKGYLGSSTSMSTQLFHAWEKVTNVHVVKRALSLKESINWFITRNSNLAQTLIRNIISLTGPDFPLEEAPVFKRTGSALHRFKSARYSEGGYSSVCPNLLSHISVSTDTMSDLTQDGKNYDFMFQPLMLYAQTWTSELVQRDTRLRDSTFHWHLRCNRCVRPIDDITLETSQIFEFPDVSKRISRMVSGAVPHFRKLPDIRLRPGDFESLSGREKSRHIGSAQGLLYSILVAIHDSGYNDGTIFPVNIYGKVSPRDYLRGLARGVLIGSSICFLTRMTNININRPLELISGVISYILLRLDNHPSLYVMLREPSLRGEIFSIPQKIPAAYPTTMKEGNRSILCYLQHVLRYEREVITASPENDWLWIFSDFRSAKMTYLTLITYQSHLLLRRVERSLSKGMRANLQQLSSLMRQVLGGHGEDTLESYDDIQRLLKDSLRRTRWVDQEVRHAAKTMTGDYSPNKKVSRKVGCSEWVCSAQQIAVSTSANPAPVSELDLRALSKRFQNPLISGLRVVQWATGAHYKLKPILDDLKVFPSLCLVVGDGSGGISRAVLNMFPDAKLVFNSLLEVNDLMASGTHPLPPSAIMSGGDDIVSRVIDVDSIWEKPSDLRNLTTWGYFQSVQKQVNMSFDLIICDAEVHDIASINQITLLMSDFALSIDGPLYLVFKTYGTMLVNPDYKAIQHLSRAFPSVTGFVTQVTSSFSSELYLRFSKRGKFFRDAEYLTSSTLREMSLVLFNCSSPKSEMQRARSLNYQDLVRGFPEEIISNPYNEMIITLIDNDVESFLVHKMVDDLELQRGTLSKVAIIIAIMIVFSNRVFNISKPLADPLFYPPSDPKILRHFNICCSTLMYLSTALGDVPSFARLHDLYNRPITYYFRKQVIRGNIYLSWSWSGDTPVFKRVACNSSLSLSSHWIRLIYKIVKTTRLVGNIEDLSGEVERHLHGYNRWITLKDIRSRSSLLDYSCL</sequence>
<gene>
    <name type="primary">L</name>
</gene>
<protein>
    <recommendedName>
        <fullName>Large structural protein</fullName>
        <shortName>Protein L</shortName>
    </recommendedName>
    <alternativeName>
        <fullName>Replicase</fullName>
    </alternativeName>
    <alternativeName>
        <fullName>Transcriptase</fullName>
    </alternativeName>
    <domain>
        <recommendedName>
            <fullName>RNA-directed RNA polymerase</fullName>
            <ecNumber evidence="3">2.7.7.48</ecNumber>
        </recommendedName>
    </domain>
    <domain>
        <recommendedName>
            <fullName evidence="2">GTP phosphohydrolase</fullName>
            <ecNumber evidence="2">3.6.1.-</ecNumber>
        </recommendedName>
    </domain>
    <domain>
        <recommendedName>
            <fullName evidence="7">GDP polyribonucleotidyltransferase</fullName>
            <ecNumber evidence="2">2.7.7.88</ecNumber>
        </recommendedName>
        <alternativeName>
            <fullName evidence="7">PRNTase</fullName>
        </alternativeName>
    </domain>
    <domain>
        <recommendedName>
            <fullName evidence="7">mRNA cap methyltransferase</fullName>
            <ecNumber evidence="2">2.1.1.375</ecNumber>
        </recommendedName>
        <alternativeName>
            <fullName evidence="2">mRNA (guanine-N(7)-)-methyltransferase</fullName>
            <shortName evidence="2">G-N7-MTase</shortName>
        </alternativeName>
        <alternativeName>
            <fullName evidence="2">mRNA (nucleoside-2'-O-)-methyltransferase</fullName>
            <shortName evidence="2">N1-2'-O-MTase</shortName>
        </alternativeName>
    </domain>
</protein>
<keyword id="KW-0067">ATP-binding</keyword>
<keyword id="KW-1035">Host cytoplasm</keyword>
<keyword id="KW-0378">Hydrolase</keyword>
<keyword id="KW-0489">Methyltransferase</keyword>
<keyword id="KW-0506">mRNA capping</keyword>
<keyword id="KW-0507">mRNA processing</keyword>
<keyword id="KW-0511">Multifunctional enzyme</keyword>
<keyword id="KW-0547">Nucleotide-binding</keyword>
<keyword id="KW-0548">Nucleotidyltransferase</keyword>
<keyword id="KW-0696">RNA-directed RNA polymerase</keyword>
<keyword id="KW-0949">S-adenosyl-L-methionine</keyword>
<keyword id="KW-0808">Transferase</keyword>
<keyword id="KW-0693">Viral RNA replication</keyword>
<keyword id="KW-0946">Virion</keyword>
<dbReference type="EC" id="2.7.7.48" evidence="3"/>
<dbReference type="EC" id="3.6.1.-" evidence="2"/>
<dbReference type="EC" id="2.7.7.88" evidence="2"/>
<dbReference type="EC" id="2.1.1.375" evidence="2"/>
<dbReference type="EMBL" id="DQ875051">
    <property type="protein sequence ID" value="ABI47946.1"/>
    <property type="molecule type" value="Other_RNA"/>
</dbReference>
<dbReference type="SMR" id="Q0GBX5"/>
<dbReference type="Proteomes" id="UP000008618">
    <property type="component" value="Genome"/>
</dbReference>
<dbReference type="GO" id="GO:0030430">
    <property type="term" value="C:host cell cytoplasm"/>
    <property type="evidence" value="ECO:0007669"/>
    <property type="project" value="UniProtKB-SubCell"/>
</dbReference>
<dbReference type="GO" id="GO:0044423">
    <property type="term" value="C:virion component"/>
    <property type="evidence" value="ECO:0007669"/>
    <property type="project" value="UniProtKB-KW"/>
</dbReference>
<dbReference type="GO" id="GO:0005524">
    <property type="term" value="F:ATP binding"/>
    <property type="evidence" value="ECO:0007669"/>
    <property type="project" value="UniProtKB-KW"/>
</dbReference>
<dbReference type="GO" id="GO:0003924">
    <property type="term" value="F:GTPase activity"/>
    <property type="evidence" value="ECO:0007669"/>
    <property type="project" value="RHEA"/>
</dbReference>
<dbReference type="GO" id="GO:0004482">
    <property type="term" value="F:mRNA 5'-cap (guanine-N7-)-methyltransferase activity"/>
    <property type="evidence" value="ECO:0007669"/>
    <property type="project" value="InterPro"/>
</dbReference>
<dbReference type="GO" id="GO:0003968">
    <property type="term" value="F:RNA-directed RNA polymerase activity"/>
    <property type="evidence" value="ECO:0007669"/>
    <property type="project" value="UniProtKB-KW"/>
</dbReference>
<dbReference type="GO" id="GO:0039689">
    <property type="term" value="P:negative stranded viral RNA replication"/>
    <property type="evidence" value="ECO:0000250"/>
    <property type="project" value="UniProtKB"/>
</dbReference>
<dbReference type="InterPro" id="IPR039530">
    <property type="entry name" value="L_methyltransferase_rhabdo"/>
</dbReference>
<dbReference type="InterPro" id="IPR039736">
    <property type="entry name" value="L_poly_C"/>
</dbReference>
<dbReference type="InterPro" id="IPR048398">
    <property type="entry name" value="Methyltrans_Mon_C"/>
</dbReference>
<dbReference type="InterPro" id="IPR048397">
    <property type="entry name" value="Methyltrans_Mon_CD"/>
</dbReference>
<dbReference type="InterPro" id="IPR026890">
    <property type="entry name" value="Mononeg_mRNAcap"/>
</dbReference>
<dbReference type="InterPro" id="IPR014023">
    <property type="entry name" value="Mononeg_RNA_pol_cat"/>
</dbReference>
<dbReference type="InterPro" id="IPR025786">
    <property type="entry name" value="Mononega_L_MeTrfase"/>
</dbReference>
<dbReference type="InterPro" id="IPR017234">
    <property type="entry name" value="RNA-dir_pol_rhabdovirus"/>
</dbReference>
<dbReference type="NCBIfam" id="TIGR04198">
    <property type="entry name" value="paramyx_RNAcap"/>
    <property type="match status" value="1"/>
</dbReference>
<dbReference type="Pfam" id="PF21080">
    <property type="entry name" value="Methyltrans_Mon_1st"/>
    <property type="match status" value="1"/>
</dbReference>
<dbReference type="Pfam" id="PF14314">
    <property type="entry name" value="Methyltrans_Mon_2nd"/>
    <property type="match status" value="1"/>
</dbReference>
<dbReference type="Pfam" id="PF21081">
    <property type="entry name" value="Methyltrans_Mon_3rd"/>
    <property type="match status" value="1"/>
</dbReference>
<dbReference type="Pfam" id="PF14318">
    <property type="entry name" value="Mononeg_mRNAcap"/>
    <property type="match status" value="1"/>
</dbReference>
<dbReference type="Pfam" id="PF00946">
    <property type="entry name" value="Mononeg_RNA_pol"/>
    <property type="match status" value="1"/>
</dbReference>
<dbReference type="PIRSF" id="PIRSF037546">
    <property type="entry name" value="RNA_pol_RhabdoV_sub"/>
    <property type="match status" value="1"/>
</dbReference>
<dbReference type="PROSITE" id="PS50526">
    <property type="entry name" value="RDRP_SSRNA_NEG_NONSEG"/>
    <property type="match status" value="1"/>
</dbReference>
<dbReference type="PROSITE" id="PS51590">
    <property type="entry name" value="SAM_MT_MNV_L"/>
    <property type="match status" value="1"/>
</dbReference>
<organismHost>
    <name type="scientific">Homo sapiens</name>
    <name type="common">Human</name>
    <dbReference type="NCBI Taxonomy" id="9606"/>
</organismHost>
<organismHost>
    <name type="scientific">Mammalia</name>
    <dbReference type="NCBI Taxonomy" id="40674"/>
</organismHost>
<accession>Q0GBX5</accession>
<feature type="chain" id="PRO_0000294419" description="Large structural protein">
    <location>
        <begin position="1"/>
        <end position="2127"/>
    </location>
</feature>
<feature type="domain" description="RdRp catalytic" evidence="4">
    <location>
        <begin position="611"/>
        <end position="799"/>
    </location>
</feature>
<feature type="domain" description="Mononegavirus-type SAM-dependent 2'-O-MTase" evidence="5">
    <location>
        <begin position="1674"/>
        <end position="1871"/>
    </location>
</feature>
<feature type="region of interest" description="Disordered" evidence="6">
    <location>
        <begin position="1"/>
        <end position="28"/>
    </location>
</feature>
<feature type="region of interest" description="Interaction with P protein" evidence="1">
    <location>
        <begin position="1562"/>
        <end position="2127"/>
    </location>
</feature>
<feature type="compositionally biased region" description="Acidic residues" evidence="6">
    <location>
        <begin position="1"/>
        <end position="18"/>
    </location>
</feature>